<protein>
    <recommendedName>
        <fullName evidence="1">Ribosomal RNA large subunit methyltransferase F</fullName>
        <ecNumber evidence="1">2.1.1.181</ecNumber>
    </recommendedName>
    <alternativeName>
        <fullName evidence="1">23S rRNA mA1618 methyltransferase</fullName>
    </alternativeName>
    <alternativeName>
        <fullName evidence="1">rRNA adenine N-6-methyltransferase</fullName>
    </alternativeName>
</protein>
<feature type="chain" id="PRO_1000188523" description="Ribosomal RNA large subunit methyltransferase F">
    <location>
        <begin position="1"/>
        <end position="308"/>
    </location>
</feature>
<keyword id="KW-0963">Cytoplasm</keyword>
<keyword id="KW-0489">Methyltransferase</keyword>
<keyword id="KW-0698">rRNA processing</keyword>
<keyword id="KW-0949">S-adenosyl-L-methionine</keyword>
<keyword id="KW-0808">Transferase</keyword>
<name>RLMF_ECO8A</name>
<comment type="function">
    <text evidence="1">Specifically methylates the adenine in position 1618 of 23S rRNA.</text>
</comment>
<comment type="catalytic activity">
    <reaction evidence="1">
        <text>adenosine(1618) in 23S rRNA + S-adenosyl-L-methionine = N(6)-methyladenosine(1618) in 23S rRNA + S-adenosyl-L-homocysteine + H(+)</text>
        <dbReference type="Rhea" id="RHEA:16497"/>
        <dbReference type="Rhea" id="RHEA-COMP:10229"/>
        <dbReference type="Rhea" id="RHEA-COMP:10231"/>
        <dbReference type="ChEBI" id="CHEBI:15378"/>
        <dbReference type="ChEBI" id="CHEBI:57856"/>
        <dbReference type="ChEBI" id="CHEBI:59789"/>
        <dbReference type="ChEBI" id="CHEBI:74411"/>
        <dbReference type="ChEBI" id="CHEBI:74449"/>
        <dbReference type="EC" id="2.1.1.181"/>
    </reaction>
</comment>
<comment type="subcellular location">
    <subcellularLocation>
        <location evidence="1">Cytoplasm</location>
    </subcellularLocation>
</comment>
<comment type="similarity">
    <text evidence="1">Belongs to the methyltransferase superfamily. METTL16/RlmF family.</text>
</comment>
<gene>
    <name evidence="1" type="primary">rlmF</name>
    <name type="ordered locus">ECIAI1_0845</name>
</gene>
<dbReference type="EC" id="2.1.1.181" evidence="1"/>
<dbReference type="EMBL" id="CU928160">
    <property type="protein sequence ID" value="CAQ97710.1"/>
    <property type="molecule type" value="Genomic_DNA"/>
</dbReference>
<dbReference type="RefSeq" id="WP_001275941.1">
    <property type="nucleotide sequence ID" value="NC_011741.1"/>
</dbReference>
<dbReference type="SMR" id="B7M782"/>
<dbReference type="GeneID" id="93776621"/>
<dbReference type="KEGG" id="ecr:ECIAI1_0845"/>
<dbReference type="HOGENOM" id="CLU_027534_3_0_6"/>
<dbReference type="GO" id="GO:0005737">
    <property type="term" value="C:cytoplasm"/>
    <property type="evidence" value="ECO:0007669"/>
    <property type="project" value="UniProtKB-SubCell"/>
</dbReference>
<dbReference type="GO" id="GO:0052907">
    <property type="term" value="F:23S rRNA (adenine(1618)-N(6))-methyltransferase activity"/>
    <property type="evidence" value="ECO:0007669"/>
    <property type="project" value="UniProtKB-EC"/>
</dbReference>
<dbReference type="GO" id="GO:0070475">
    <property type="term" value="P:rRNA base methylation"/>
    <property type="evidence" value="ECO:0007669"/>
    <property type="project" value="TreeGrafter"/>
</dbReference>
<dbReference type="FunFam" id="3.40.50.150:FF:000045">
    <property type="entry name" value="Ribosomal RNA large subunit methyltransferase F"/>
    <property type="match status" value="1"/>
</dbReference>
<dbReference type="Gene3D" id="3.40.50.150">
    <property type="entry name" value="Vaccinia Virus protein VP39"/>
    <property type="match status" value="1"/>
</dbReference>
<dbReference type="HAMAP" id="MF_01848">
    <property type="entry name" value="23SrRNA_methyltr_F"/>
    <property type="match status" value="1"/>
</dbReference>
<dbReference type="InterPro" id="IPR010286">
    <property type="entry name" value="METTL16/RlmF"/>
</dbReference>
<dbReference type="InterPro" id="IPR016909">
    <property type="entry name" value="rRNA_lsu_MeTfrase_F"/>
</dbReference>
<dbReference type="InterPro" id="IPR029063">
    <property type="entry name" value="SAM-dependent_MTases_sf"/>
</dbReference>
<dbReference type="NCBIfam" id="NF008725">
    <property type="entry name" value="PRK11727.1"/>
    <property type="match status" value="1"/>
</dbReference>
<dbReference type="PANTHER" id="PTHR13393:SF0">
    <property type="entry name" value="RNA N6-ADENOSINE-METHYLTRANSFERASE METTL16"/>
    <property type="match status" value="1"/>
</dbReference>
<dbReference type="PANTHER" id="PTHR13393">
    <property type="entry name" value="SAM-DEPENDENT METHYLTRANSFERASE"/>
    <property type="match status" value="1"/>
</dbReference>
<dbReference type="Pfam" id="PF05971">
    <property type="entry name" value="Methyltransf_10"/>
    <property type="match status" value="1"/>
</dbReference>
<dbReference type="PIRSF" id="PIRSF029038">
    <property type="entry name" value="Mtase_YbiN_prd"/>
    <property type="match status" value="1"/>
</dbReference>
<dbReference type="SUPFAM" id="SSF53335">
    <property type="entry name" value="S-adenosyl-L-methionine-dependent methyltransferases"/>
    <property type="match status" value="1"/>
</dbReference>
<reference key="1">
    <citation type="journal article" date="2009" name="PLoS Genet.">
        <title>Organised genome dynamics in the Escherichia coli species results in highly diverse adaptive paths.</title>
        <authorList>
            <person name="Touchon M."/>
            <person name="Hoede C."/>
            <person name="Tenaillon O."/>
            <person name="Barbe V."/>
            <person name="Baeriswyl S."/>
            <person name="Bidet P."/>
            <person name="Bingen E."/>
            <person name="Bonacorsi S."/>
            <person name="Bouchier C."/>
            <person name="Bouvet O."/>
            <person name="Calteau A."/>
            <person name="Chiapello H."/>
            <person name="Clermont O."/>
            <person name="Cruveiller S."/>
            <person name="Danchin A."/>
            <person name="Diard M."/>
            <person name="Dossat C."/>
            <person name="Karoui M.E."/>
            <person name="Frapy E."/>
            <person name="Garry L."/>
            <person name="Ghigo J.M."/>
            <person name="Gilles A.M."/>
            <person name="Johnson J."/>
            <person name="Le Bouguenec C."/>
            <person name="Lescat M."/>
            <person name="Mangenot S."/>
            <person name="Martinez-Jehanne V."/>
            <person name="Matic I."/>
            <person name="Nassif X."/>
            <person name="Oztas S."/>
            <person name="Petit M.A."/>
            <person name="Pichon C."/>
            <person name="Rouy Z."/>
            <person name="Ruf C.S."/>
            <person name="Schneider D."/>
            <person name="Tourret J."/>
            <person name="Vacherie B."/>
            <person name="Vallenet D."/>
            <person name="Medigue C."/>
            <person name="Rocha E.P.C."/>
            <person name="Denamur E."/>
        </authorList>
    </citation>
    <scope>NUCLEOTIDE SEQUENCE [LARGE SCALE GENOMIC DNA]</scope>
    <source>
        <strain>IAI1</strain>
    </source>
</reference>
<accession>B7M782</accession>
<evidence type="ECO:0000255" key="1">
    <source>
        <dbReference type="HAMAP-Rule" id="MF_01848"/>
    </source>
</evidence>
<organism>
    <name type="scientific">Escherichia coli O8 (strain IAI1)</name>
    <dbReference type="NCBI Taxonomy" id="585034"/>
    <lineage>
        <taxon>Bacteria</taxon>
        <taxon>Pseudomonadati</taxon>
        <taxon>Pseudomonadota</taxon>
        <taxon>Gammaproteobacteria</taxon>
        <taxon>Enterobacterales</taxon>
        <taxon>Enterobacteriaceae</taxon>
        <taxon>Escherichia</taxon>
    </lineage>
</organism>
<sequence length="308" mass="34180">MSAQKPGLHPRNRHHSRYDLATLCQVNPELRQFLTLTPAGEQSVDFANPLAVKALNKALLAHFYAVANWDIPDGFLCPPVPGRADYIHHLADLLAEASGTIPANASILDIGVGANCIYPLIGVHEYGWRFTGSETSSQALSSAQAIISANPGLNRAIRLRRQKESGAIFNGIIHKNEQYDATLCNPPFHDSAAAARAGSERKRRNLGLNKDDALNFGGQQQELWCEGGEVAFIKKMIEESKGFAKQVMWFTSLVSRGENLPPLYRALTDVGAVKVVKKEMAQGQKQSRFIAWTFMNDEQRRRFVNRQR</sequence>
<proteinExistence type="inferred from homology"/>